<organism>
    <name type="scientific">Pseudomonas putida (strain W619)</name>
    <dbReference type="NCBI Taxonomy" id="390235"/>
    <lineage>
        <taxon>Bacteria</taxon>
        <taxon>Pseudomonadati</taxon>
        <taxon>Pseudomonadota</taxon>
        <taxon>Gammaproteobacteria</taxon>
        <taxon>Pseudomonadales</taxon>
        <taxon>Pseudomonadaceae</taxon>
        <taxon>Pseudomonas</taxon>
    </lineage>
</organism>
<reference key="1">
    <citation type="submission" date="2008-02" db="EMBL/GenBank/DDBJ databases">
        <title>Complete sequence of Pseudomonas putida W619.</title>
        <authorList>
            <person name="Copeland A."/>
            <person name="Lucas S."/>
            <person name="Lapidus A."/>
            <person name="Barry K."/>
            <person name="Detter J.C."/>
            <person name="Glavina del Rio T."/>
            <person name="Dalin E."/>
            <person name="Tice H."/>
            <person name="Pitluck S."/>
            <person name="Chain P."/>
            <person name="Malfatti S."/>
            <person name="Shin M."/>
            <person name="Vergez L."/>
            <person name="Schmutz J."/>
            <person name="Larimer F."/>
            <person name="Land M."/>
            <person name="Hauser L."/>
            <person name="Kyrpides N."/>
            <person name="Kim E."/>
            <person name="Taghavi S."/>
            <person name="Vangronsveld D."/>
            <person name="van der Lelie D."/>
            <person name="Richardson P."/>
        </authorList>
    </citation>
    <scope>NUCLEOTIDE SEQUENCE [LARGE SCALE GENOMIC DNA]</scope>
    <source>
        <strain>W619</strain>
    </source>
</reference>
<name>TRMD_PSEPW</name>
<proteinExistence type="inferred from homology"/>
<evidence type="ECO:0000255" key="1">
    <source>
        <dbReference type="HAMAP-Rule" id="MF_00605"/>
    </source>
</evidence>
<comment type="function">
    <text evidence="1">Specifically methylates guanosine-37 in various tRNAs.</text>
</comment>
<comment type="catalytic activity">
    <reaction evidence="1">
        <text>guanosine(37) in tRNA + S-adenosyl-L-methionine = N(1)-methylguanosine(37) in tRNA + S-adenosyl-L-homocysteine + H(+)</text>
        <dbReference type="Rhea" id="RHEA:36899"/>
        <dbReference type="Rhea" id="RHEA-COMP:10145"/>
        <dbReference type="Rhea" id="RHEA-COMP:10147"/>
        <dbReference type="ChEBI" id="CHEBI:15378"/>
        <dbReference type="ChEBI" id="CHEBI:57856"/>
        <dbReference type="ChEBI" id="CHEBI:59789"/>
        <dbReference type="ChEBI" id="CHEBI:73542"/>
        <dbReference type="ChEBI" id="CHEBI:74269"/>
        <dbReference type="EC" id="2.1.1.228"/>
    </reaction>
</comment>
<comment type="subunit">
    <text evidence="1">Homodimer.</text>
</comment>
<comment type="subcellular location">
    <subcellularLocation>
        <location evidence="1">Cytoplasm</location>
    </subcellularLocation>
</comment>
<comment type="similarity">
    <text evidence="1">Belongs to the RNA methyltransferase TrmD family.</text>
</comment>
<feature type="chain" id="PRO_1000130198" description="tRNA (guanine-N(1)-)-methyltransferase">
    <location>
        <begin position="1"/>
        <end position="250"/>
    </location>
</feature>
<feature type="binding site" evidence="1">
    <location>
        <position position="116"/>
    </location>
    <ligand>
        <name>S-adenosyl-L-methionine</name>
        <dbReference type="ChEBI" id="CHEBI:59789"/>
    </ligand>
</feature>
<feature type="binding site" evidence="1">
    <location>
        <begin position="136"/>
        <end position="141"/>
    </location>
    <ligand>
        <name>S-adenosyl-L-methionine</name>
        <dbReference type="ChEBI" id="CHEBI:59789"/>
    </ligand>
</feature>
<dbReference type="EC" id="2.1.1.228" evidence="1"/>
<dbReference type="EMBL" id="CP000949">
    <property type="protein sequence ID" value="ACA74635.1"/>
    <property type="molecule type" value="Genomic_DNA"/>
</dbReference>
<dbReference type="SMR" id="B1JDE3"/>
<dbReference type="STRING" id="390235.PputW619_4155"/>
<dbReference type="KEGG" id="ppw:PputW619_4155"/>
<dbReference type="eggNOG" id="COG0336">
    <property type="taxonomic scope" value="Bacteria"/>
</dbReference>
<dbReference type="HOGENOM" id="CLU_047363_0_2_6"/>
<dbReference type="OrthoDB" id="9807416at2"/>
<dbReference type="GO" id="GO:0005829">
    <property type="term" value="C:cytosol"/>
    <property type="evidence" value="ECO:0007669"/>
    <property type="project" value="TreeGrafter"/>
</dbReference>
<dbReference type="GO" id="GO:0052906">
    <property type="term" value="F:tRNA (guanine(37)-N1)-methyltransferase activity"/>
    <property type="evidence" value="ECO:0007669"/>
    <property type="project" value="UniProtKB-UniRule"/>
</dbReference>
<dbReference type="GO" id="GO:0002939">
    <property type="term" value="P:tRNA N1-guanine methylation"/>
    <property type="evidence" value="ECO:0007669"/>
    <property type="project" value="TreeGrafter"/>
</dbReference>
<dbReference type="CDD" id="cd18080">
    <property type="entry name" value="TrmD-like"/>
    <property type="match status" value="1"/>
</dbReference>
<dbReference type="FunFam" id="1.10.1270.20:FF:000001">
    <property type="entry name" value="tRNA (guanine-N(1)-)-methyltransferase"/>
    <property type="match status" value="1"/>
</dbReference>
<dbReference type="FunFam" id="3.40.1280.10:FF:000001">
    <property type="entry name" value="tRNA (guanine-N(1)-)-methyltransferase"/>
    <property type="match status" value="1"/>
</dbReference>
<dbReference type="Gene3D" id="3.40.1280.10">
    <property type="match status" value="1"/>
</dbReference>
<dbReference type="Gene3D" id="1.10.1270.20">
    <property type="entry name" value="tRNA(m1g37)methyltransferase, domain 2"/>
    <property type="match status" value="1"/>
</dbReference>
<dbReference type="HAMAP" id="MF_00605">
    <property type="entry name" value="TrmD"/>
    <property type="match status" value="1"/>
</dbReference>
<dbReference type="InterPro" id="IPR029028">
    <property type="entry name" value="Alpha/beta_knot_MTases"/>
</dbReference>
<dbReference type="InterPro" id="IPR023148">
    <property type="entry name" value="tRNA_m1G_MeTrfase_C_sf"/>
</dbReference>
<dbReference type="InterPro" id="IPR002649">
    <property type="entry name" value="tRNA_m1G_MeTrfase_TrmD"/>
</dbReference>
<dbReference type="InterPro" id="IPR029026">
    <property type="entry name" value="tRNA_m1G_MTases_N"/>
</dbReference>
<dbReference type="InterPro" id="IPR016009">
    <property type="entry name" value="tRNA_MeTrfase_TRMD/TRM10"/>
</dbReference>
<dbReference type="NCBIfam" id="NF000648">
    <property type="entry name" value="PRK00026.1"/>
    <property type="match status" value="1"/>
</dbReference>
<dbReference type="NCBIfam" id="TIGR00088">
    <property type="entry name" value="trmD"/>
    <property type="match status" value="1"/>
</dbReference>
<dbReference type="PANTHER" id="PTHR46417">
    <property type="entry name" value="TRNA (GUANINE-N(1)-)-METHYLTRANSFERASE"/>
    <property type="match status" value="1"/>
</dbReference>
<dbReference type="PANTHER" id="PTHR46417:SF1">
    <property type="entry name" value="TRNA (GUANINE-N(1)-)-METHYLTRANSFERASE"/>
    <property type="match status" value="1"/>
</dbReference>
<dbReference type="Pfam" id="PF01746">
    <property type="entry name" value="tRNA_m1G_MT"/>
    <property type="match status" value="1"/>
</dbReference>
<dbReference type="PIRSF" id="PIRSF000386">
    <property type="entry name" value="tRNA_mtase"/>
    <property type="match status" value="1"/>
</dbReference>
<dbReference type="SUPFAM" id="SSF75217">
    <property type="entry name" value="alpha/beta knot"/>
    <property type="match status" value="1"/>
</dbReference>
<protein>
    <recommendedName>
        <fullName evidence="1">tRNA (guanine-N(1)-)-methyltransferase</fullName>
        <ecNumber evidence="1">2.1.1.228</ecNumber>
    </recommendedName>
    <alternativeName>
        <fullName evidence="1">M1G-methyltransferase</fullName>
    </alternativeName>
    <alternativeName>
        <fullName evidence="1">tRNA [GM37] methyltransferase</fullName>
    </alternativeName>
</protein>
<accession>B1JDE3</accession>
<keyword id="KW-0963">Cytoplasm</keyword>
<keyword id="KW-0489">Methyltransferase</keyword>
<keyword id="KW-0949">S-adenosyl-L-methionine</keyword>
<keyword id="KW-0808">Transferase</keyword>
<keyword id="KW-0819">tRNA processing</keyword>
<sequence>MGNLRVDVITLFPEMFSAITEYGITSRAVKQGLLQVTCWNPRDYTTDRHHTVDDRPFGGGPGMVMKIKPLEDALVSARQATGASAKVIYLSPQGRKLTQQAVKGLAEQESLILIAGRYEGIDERFIEAHVDEEWSIGDYVLSGGELPAMVLIDAVTRLLPGALGHVDSAEEDSFTDGLLDCPHYTRPEVYADQRVPDVLLSGNHAHIRRWRMKQSLGRTFERRADLLESRSLSGEEKKLLEEYLRERDDS</sequence>
<gene>
    <name evidence="1" type="primary">trmD</name>
    <name type="ordered locus">PputW619_4155</name>
</gene>